<proteinExistence type="evidence at protein level"/>
<dbReference type="EMBL" id="AB022216">
    <property type="protein sequence ID" value="BAB02724.1"/>
    <property type="molecule type" value="Genomic_DNA"/>
</dbReference>
<dbReference type="EMBL" id="CP002686">
    <property type="protein sequence ID" value="AEE75922.1"/>
    <property type="molecule type" value="Genomic_DNA"/>
</dbReference>
<dbReference type="RefSeq" id="NP_188348.1">
    <property type="nucleotide sequence ID" value="NM_112599.2"/>
</dbReference>
<dbReference type="SMR" id="Q9LUV1"/>
<dbReference type="BioGRID" id="6314">
    <property type="interactions" value="1"/>
</dbReference>
<dbReference type="FunCoup" id="Q9LUV1">
    <property type="interactions" value="17"/>
</dbReference>
<dbReference type="STRING" id="3702.Q9LUV1"/>
<dbReference type="GlyCosmos" id="Q9LUV1">
    <property type="glycosylation" value="2 sites, No reported glycans"/>
</dbReference>
<dbReference type="GlyGen" id="Q9LUV1">
    <property type="glycosylation" value="2 sites"/>
</dbReference>
<dbReference type="iPTMnet" id="Q9LUV1"/>
<dbReference type="PaxDb" id="3702-AT3G17220.1"/>
<dbReference type="ProteomicsDB" id="234934"/>
<dbReference type="EnsemblPlants" id="AT3G17220.1">
    <property type="protein sequence ID" value="AT3G17220.1"/>
    <property type="gene ID" value="AT3G17220"/>
</dbReference>
<dbReference type="GeneID" id="820981"/>
<dbReference type="Gramene" id="AT3G17220.1">
    <property type="protein sequence ID" value="AT3G17220.1"/>
    <property type="gene ID" value="AT3G17220"/>
</dbReference>
<dbReference type="KEGG" id="ath:AT3G17220"/>
<dbReference type="Araport" id="AT3G17220"/>
<dbReference type="TAIR" id="AT3G17220">
    <property type="gene designation" value="PMEI2"/>
</dbReference>
<dbReference type="eggNOG" id="ENOG502S9C3">
    <property type="taxonomic scope" value="Eukaryota"/>
</dbReference>
<dbReference type="HOGENOM" id="CLU_123543_1_0_1"/>
<dbReference type="InParanoid" id="Q9LUV1"/>
<dbReference type="OMA" id="CSKTQKP"/>
<dbReference type="OrthoDB" id="764172at2759"/>
<dbReference type="PhylomeDB" id="Q9LUV1"/>
<dbReference type="PRO" id="PR:Q9LUV1"/>
<dbReference type="Proteomes" id="UP000006548">
    <property type="component" value="Chromosome 3"/>
</dbReference>
<dbReference type="ExpressionAtlas" id="Q9LUV1">
    <property type="expression patterns" value="baseline and differential"/>
</dbReference>
<dbReference type="GO" id="GO:0048046">
    <property type="term" value="C:apoplast"/>
    <property type="evidence" value="ECO:0007669"/>
    <property type="project" value="UniProtKB-SubCell"/>
</dbReference>
<dbReference type="GO" id="GO:0012505">
    <property type="term" value="C:endomembrane system"/>
    <property type="evidence" value="ECO:0000314"/>
    <property type="project" value="TAIR"/>
</dbReference>
<dbReference type="GO" id="GO:0090404">
    <property type="term" value="C:pollen tube tip"/>
    <property type="evidence" value="ECO:0000314"/>
    <property type="project" value="TAIR"/>
</dbReference>
<dbReference type="GO" id="GO:0046910">
    <property type="term" value="F:pectinesterase inhibitor activity"/>
    <property type="evidence" value="ECO:0000314"/>
    <property type="project" value="TAIR"/>
</dbReference>
<dbReference type="GO" id="GO:0009860">
    <property type="term" value="P:pollen tube growth"/>
    <property type="evidence" value="ECO:0000314"/>
    <property type="project" value="TAIR"/>
</dbReference>
<dbReference type="CDD" id="cd15797">
    <property type="entry name" value="PMEI"/>
    <property type="match status" value="1"/>
</dbReference>
<dbReference type="FunFam" id="1.20.140.40:FF:000008">
    <property type="entry name" value="Invertase/pectin methylesterase inhibitor family protein"/>
    <property type="match status" value="1"/>
</dbReference>
<dbReference type="Gene3D" id="1.20.140.40">
    <property type="entry name" value="Invertase/pectin methylesterase inhibitor family protein"/>
    <property type="match status" value="1"/>
</dbReference>
<dbReference type="InterPro" id="IPR035513">
    <property type="entry name" value="Invertase/methylesterase_inhib"/>
</dbReference>
<dbReference type="InterPro" id="IPR052421">
    <property type="entry name" value="PCW_Enzyme_Inhibitor"/>
</dbReference>
<dbReference type="InterPro" id="IPR006501">
    <property type="entry name" value="Pectinesterase_inhib_dom"/>
</dbReference>
<dbReference type="InterPro" id="IPR034086">
    <property type="entry name" value="PMEI_plant"/>
</dbReference>
<dbReference type="NCBIfam" id="TIGR01614">
    <property type="entry name" value="PME_inhib"/>
    <property type="match status" value="1"/>
</dbReference>
<dbReference type="PANTHER" id="PTHR36710:SF14">
    <property type="entry name" value="PECTINESTERASE INHIBITOR 2"/>
    <property type="match status" value="1"/>
</dbReference>
<dbReference type="PANTHER" id="PTHR36710">
    <property type="entry name" value="PECTINESTERASE INHIBITOR-LIKE"/>
    <property type="match status" value="1"/>
</dbReference>
<dbReference type="Pfam" id="PF04043">
    <property type="entry name" value="PMEI"/>
    <property type="match status" value="1"/>
</dbReference>
<dbReference type="SMART" id="SM00856">
    <property type="entry name" value="PMEI"/>
    <property type="match status" value="1"/>
</dbReference>
<dbReference type="SUPFAM" id="SSF101148">
    <property type="entry name" value="Plant invertase/pectin methylesterase inhibitor"/>
    <property type="match status" value="1"/>
</dbReference>
<gene>
    <name evidence="7" type="primary">PMEI2</name>
    <name type="ordered locus">At3g17220</name>
    <name type="ORF">MGD8.3</name>
</gene>
<accession>Q9LUV1</accession>
<sequence length="173" mass="18367">MAAYLTNRVLMSSLMFFVMTGSLNAQVADIKAICGKAKNQSFCTSYMKSNPKTSGADLQTLANITFGSAQTSASEGFRKIQSLVKTATNPTMKKAYTSCVQHYKSAISSLNDAKQSLASGDGKGLNIKVSAAMEGPSTCEQDMADFKVDPSAVKNSGDFQNICGIVLVISNMM</sequence>
<feature type="signal peptide" evidence="2">
    <location>
        <begin position="1"/>
        <end position="25"/>
    </location>
</feature>
<feature type="chain" id="PRO_0000024707" description="Pectinesterase inhibitor 2">
    <location>
        <begin position="26"/>
        <end position="173"/>
    </location>
</feature>
<feature type="glycosylation site" description="N-linked (GlcNAc...) asparagine" evidence="3">
    <location>
        <position position="39"/>
    </location>
</feature>
<feature type="glycosylation site" description="N-linked (GlcNAc...) asparagine" evidence="3">
    <location>
        <position position="63"/>
    </location>
</feature>
<feature type="disulfide bond" evidence="1">
    <location>
        <begin position="34"/>
        <end position="43"/>
    </location>
</feature>
<feature type="disulfide bond" evidence="1">
    <location>
        <begin position="99"/>
        <end position="139"/>
    </location>
</feature>
<keyword id="KW-0052">Apoplast</keyword>
<keyword id="KW-1015">Disulfide bond</keyword>
<keyword id="KW-0325">Glycoprotein</keyword>
<keyword id="KW-1185">Reference proteome</keyword>
<keyword id="KW-0964">Secreted</keyword>
<keyword id="KW-0732">Signal</keyword>
<evidence type="ECO:0000250" key="1">
    <source>
        <dbReference type="UniProtKB" id="Q9LNF2"/>
    </source>
</evidence>
<evidence type="ECO:0000255" key="2"/>
<evidence type="ECO:0000255" key="3">
    <source>
        <dbReference type="PROSITE-ProRule" id="PRU00498"/>
    </source>
</evidence>
<evidence type="ECO:0000269" key="4">
    <source>
    </source>
</evidence>
<evidence type="ECO:0000269" key="5">
    <source>
    </source>
</evidence>
<evidence type="ECO:0000269" key="6">
    <source>
    </source>
</evidence>
<evidence type="ECO:0000303" key="7">
    <source>
    </source>
</evidence>
<evidence type="ECO:0000305" key="8"/>
<protein>
    <recommendedName>
        <fullName evidence="8">Pectinesterase inhibitor 2</fullName>
    </recommendedName>
    <alternativeName>
        <fullName evidence="7">Pectin methylesterase inhibitor 2</fullName>
        <shortName evidence="7">AtPMEI2</shortName>
    </alternativeName>
</protein>
<comment type="function">
    <text evidence="4">Inhibits pectin methylesterase (PME) from flowers, siliques and pollen tube.</text>
</comment>
<comment type="subunit">
    <text evidence="6">Interacts with PPME1.</text>
</comment>
<comment type="subcellular location">
    <subcellularLocation>
        <location evidence="1">Secreted</location>
        <location evidence="1">Extracellular space</location>
        <location evidence="1">Apoplast</location>
    </subcellularLocation>
</comment>
<comment type="tissue specificity">
    <text evidence="4 5 6">Highest expression in flowers (PubMed:14675772, PubMed:14741367, PubMed:17971035). Expressed exclusively at the pollen tube tip (PubMed:14675772, PubMed:17971035).</text>
</comment>
<comment type="miscellaneous">
    <text>The polarized accumulation at the pollen tube apex depends at least in part on local endocytosis at the flanks of the tip.</text>
</comment>
<comment type="similarity">
    <text evidence="8">Belongs to the PMEI family.</text>
</comment>
<name>PMEI2_ARATH</name>
<organism>
    <name type="scientific">Arabidopsis thaliana</name>
    <name type="common">Mouse-ear cress</name>
    <dbReference type="NCBI Taxonomy" id="3702"/>
    <lineage>
        <taxon>Eukaryota</taxon>
        <taxon>Viridiplantae</taxon>
        <taxon>Streptophyta</taxon>
        <taxon>Embryophyta</taxon>
        <taxon>Tracheophyta</taxon>
        <taxon>Spermatophyta</taxon>
        <taxon>Magnoliopsida</taxon>
        <taxon>eudicotyledons</taxon>
        <taxon>Gunneridae</taxon>
        <taxon>Pentapetalae</taxon>
        <taxon>rosids</taxon>
        <taxon>malvids</taxon>
        <taxon>Brassicales</taxon>
        <taxon>Brassicaceae</taxon>
        <taxon>Camelineae</taxon>
        <taxon>Arabidopsis</taxon>
    </lineage>
</organism>
<reference key="1">
    <citation type="journal article" date="2000" name="DNA Res.">
        <title>Structural analysis of Arabidopsis thaliana chromosome 3. I. Sequence features of the regions of 4,504,864 bp covered by sixty P1 and TAC clones.</title>
        <authorList>
            <person name="Sato S."/>
            <person name="Nakamura Y."/>
            <person name="Kaneko T."/>
            <person name="Katoh T."/>
            <person name="Asamizu E."/>
            <person name="Tabata S."/>
        </authorList>
    </citation>
    <scope>NUCLEOTIDE SEQUENCE [LARGE SCALE GENOMIC DNA]</scope>
    <source>
        <strain>cv. Columbia</strain>
    </source>
</reference>
<reference key="2">
    <citation type="journal article" date="2017" name="Plant J.">
        <title>Araport11: a complete reannotation of the Arabidopsis thaliana reference genome.</title>
        <authorList>
            <person name="Cheng C.Y."/>
            <person name="Krishnakumar V."/>
            <person name="Chan A.P."/>
            <person name="Thibaud-Nissen F."/>
            <person name="Schobel S."/>
            <person name="Town C.D."/>
        </authorList>
    </citation>
    <scope>GENOME REANNOTATION</scope>
    <source>
        <strain>cv. Columbia</strain>
    </source>
</reference>
<reference key="3">
    <citation type="journal article" date="2003" name="FEBS Lett.">
        <title>Identification of pollen-expressed pectin methylesterase inhibitors in Arabidopsis.</title>
        <authorList>
            <person name="Wolf S."/>
            <person name="Grsic-Rausch S."/>
            <person name="Rausch T."/>
            <person name="Greiner S."/>
        </authorList>
    </citation>
    <scope>FUNCTION</scope>
    <scope>TISSUE SPECIFICITY</scope>
</reference>
<reference key="4">
    <citation type="journal article" date="2004" name="FEBS Lett.">
        <title>Two Arabidopsis thaliana genes encode functional pectin methylesterase inhibitors.</title>
        <authorList>
            <person name="Raiola A."/>
            <person name="Camardella L."/>
            <person name="Giovane A."/>
            <person name="Mattei B."/>
            <person name="De Lorenzo G."/>
            <person name="Cervone F."/>
            <person name="Bellincampi D."/>
        </authorList>
    </citation>
    <scope>TISSUE SPECIFICITY</scope>
</reference>
<reference key="5">
    <citation type="journal article" date="2008" name="Plant J.">
        <title>Elaborate spatial patterning of cell-wall PME and PMEI at the pollen tube tip involves PMEI endocytosis, and reflects the distribution of esterified and de-esterified pectins.</title>
        <authorList>
            <person name="Roeckel N."/>
            <person name="Wolf S."/>
            <person name="Kost B."/>
            <person name="Rausch T."/>
            <person name="Greiner S."/>
        </authorList>
    </citation>
    <scope>INTERACTION WITH PPME1</scope>
    <scope>TISSUE SPECIFICITY</scope>
</reference>